<sequence length="291" mass="31593">MMRILLFLATNLAVLVIASITLKLLGVDRFTGQNYGSLLVFCAVFGFAGSLVSLFISKWMAKMSTGTEVISQPRTRHEQWLLQTVEELSREAGIKMPEVGIFPAYEANAFATGWNKNDALVAVSQGLLERFSPDEVKAVLAHEIGHVANGDMVTLALIQGVVNTFVMFFARIFGNFVDKAILKNEDGPGIGYFVATIFAELVLGILASIIVMWFSRRREFRADAAGAHLAGTGAMIAALQRLRSEQGVPVQMPDTLNAFGINGGLKHGLAGLLMSHPPLEDRIEALRASAR</sequence>
<dbReference type="EC" id="3.4.24.-" evidence="1"/>
<dbReference type="EMBL" id="AE004091">
    <property type="protein sequence ID" value="AAG06218.1"/>
    <property type="molecule type" value="Genomic_DNA"/>
</dbReference>
<dbReference type="PIR" id="D83293">
    <property type="entry name" value="D83293"/>
</dbReference>
<dbReference type="RefSeq" id="NP_251520.1">
    <property type="nucleotide sequence ID" value="NC_002516.2"/>
</dbReference>
<dbReference type="RefSeq" id="WP_003090915.1">
    <property type="nucleotide sequence ID" value="NZ_QZGE01000011.1"/>
</dbReference>
<dbReference type="SMR" id="Q9I013"/>
<dbReference type="FunCoup" id="Q9I013">
    <property type="interactions" value="362"/>
</dbReference>
<dbReference type="STRING" id="208964.PA2830"/>
<dbReference type="MEROPS" id="M48.002"/>
<dbReference type="PaxDb" id="208964-PA2830"/>
<dbReference type="GeneID" id="77220667"/>
<dbReference type="GeneID" id="882810"/>
<dbReference type="KEGG" id="pae:PA2830"/>
<dbReference type="PATRIC" id="fig|208964.12.peg.2967"/>
<dbReference type="PseudoCAP" id="PA2830"/>
<dbReference type="HOGENOM" id="CLU_042266_1_0_6"/>
<dbReference type="InParanoid" id="Q9I013"/>
<dbReference type="OrthoDB" id="15218at2"/>
<dbReference type="PhylomeDB" id="Q9I013"/>
<dbReference type="BioCyc" id="PAER208964:G1FZ6-2879-MONOMER"/>
<dbReference type="Proteomes" id="UP000002438">
    <property type="component" value="Chromosome"/>
</dbReference>
<dbReference type="GO" id="GO:0005886">
    <property type="term" value="C:plasma membrane"/>
    <property type="evidence" value="ECO:0007669"/>
    <property type="project" value="UniProtKB-SubCell"/>
</dbReference>
<dbReference type="GO" id="GO:0004222">
    <property type="term" value="F:metalloendopeptidase activity"/>
    <property type="evidence" value="ECO:0007669"/>
    <property type="project" value="UniProtKB-UniRule"/>
</dbReference>
<dbReference type="GO" id="GO:0008270">
    <property type="term" value="F:zinc ion binding"/>
    <property type="evidence" value="ECO:0007669"/>
    <property type="project" value="UniProtKB-UniRule"/>
</dbReference>
<dbReference type="GO" id="GO:0006508">
    <property type="term" value="P:proteolysis"/>
    <property type="evidence" value="ECO:0007669"/>
    <property type="project" value="UniProtKB-KW"/>
</dbReference>
<dbReference type="CDD" id="cd07335">
    <property type="entry name" value="M48B_HtpX_like"/>
    <property type="match status" value="1"/>
</dbReference>
<dbReference type="Gene3D" id="3.30.2010.10">
    <property type="entry name" value="Metalloproteases ('zincins'), catalytic domain"/>
    <property type="match status" value="1"/>
</dbReference>
<dbReference type="HAMAP" id="MF_00188">
    <property type="entry name" value="Pept_M48_protease_HtpX"/>
    <property type="match status" value="1"/>
</dbReference>
<dbReference type="InterPro" id="IPR050083">
    <property type="entry name" value="HtpX_protease"/>
</dbReference>
<dbReference type="InterPro" id="IPR022919">
    <property type="entry name" value="Pept_M48_protease_HtpX"/>
</dbReference>
<dbReference type="InterPro" id="IPR001915">
    <property type="entry name" value="Peptidase_M48"/>
</dbReference>
<dbReference type="NCBIfam" id="NF003965">
    <property type="entry name" value="PRK05457.1"/>
    <property type="match status" value="1"/>
</dbReference>
<dbReference type="PANTHER" id="PTHR43221">
    <property type="entry name" value="PROTEASE HTPX"/>
    <property type="match status" value="1"/>
</dbReference>
<dbReference type="PANTHER" id="PTHR43221:SF1">
    <property type="entry name" value="PROTEASE HTPX"/>
    <property type="match status" value="1"/>
</dbReference>
<dbReference type="Pfam" id="PF01435">
    <property type="entry name" value="Peptidase_M48"/>
    <property type="match status" value="1"/>
</dbReference>
<name>HTPX_PSEAE</name>
<accession>Q9I013</accession>
<gene>
    <name evidence="1" type="primary">htpX</name>
    <name type="ordered locus">PA2830</name>
</gene>
<feature type="chain" id="PRO_0000138880" description="Protease HtpX">
    <location>
        <begin position="1"/>
        <end position="291"/>
    </location>
</feature>
<feature type="transmembrane region" description="Helical" evidence="1">
    <location>
        <begin position="4"/>
        <end position="24"/>
    </location>
</feature>
<feature type="transmembrane region" description="Helical" evidence="1">
    <location>
        <begin position="36"/>
        <end position="56"/>
    </location>
</feature>
<feature type="transmembrane region" description="Helical" evidence="1">
    <location>
        <begin position="150"/>
        <end position="170"/>
    </location>
</feature>
<feature type="transmembrane region" description="Helical" evidence="1">
    <location>
        <begin position="193"/>
        <end position="213"/>
    </location>
</feature>
<feature type="active site" evidence="1">
    <location>
        <position position="143"/>
    </location>
</feature>
<feature type="binding site" evidence="1">
    <location>
        <position position="142"/>
    </location>
    <ligand>
        <name>Zn(2+)</name>
        <dbReference type="ChEBI" id="CHEBI:29105"/>
        <note>catalytic</note>
    </ligand>
</feature>
<feature type="binding site" evidence="1">
    <location>
        <position position="146"/>
    </location>
    <ligand>
        <name>Zn(2+)</name>
        <dbReference type="ChEBI" id="CHEBI:29105"/>
        <note>catalytic</note>
    </ligand>
</feature>
<feature type="binding site" evidence="1">
    <location>
        <position position="219"/>
    </location>
    <ligand>
        <name>Zn(2+)</name>
        <dbReference type="ChEBI" id="CHEBI:29105"/>
        <note>catalytic</note>
    </ligand>
</feature>
<evidence type="ECO:0000255" key="1">
    <source>
        <dbReference type="HAMAP-Rule" id="MF_00188"/>
    </source>
</evidence>
<organism>
    <name type="scientific">Pseudomonas aeruginosa (strain ATCC 15692 / DSM 22644 / CIP 104116 / JCM 14847 / LMG 12228 / 1C / PRS 101 / PAO1)</name>
    <dbReference type="NCBI Taxonomy" id="208964"/>
    <lineage>
        <taxon>Bacteria</taxon>
        <taxon>Pseudomonadati</taxon>
        <taxon>Pseudomonadota</taxon>
        <taxon>Gammaproteobacteria</taxon>
        <taxon>Pseudomonadales</taxon>
        <taxon>Pseudomonadaceae</taxon>
        <taxon>Pseudomonas</taxon>
    </lineage>
</organism>
<keyword id="KW-0997">Cell inner membrane</keyword>
<keyword id="KW-1003">Cell membrane</keyword>
<keyword id="KW-0378">Hydrolase</keyword>
<keyword id="KW-0472">Membrane</keyword>
<keyword id="KW-0479">Metal-binding</keyword>
<keyword id="KW-0482">Metalloprotease</keyword>
<keyword id="KW-0645">Protease</keyword>
<keyword id="KW-1185">Reference proteome</keyword>
<keyword id="KW-0812">Transmembrane</keyword>
<keyword id="KW-1133">Transmembrane helix</keyword>
<keyword id="KW-0862">Zinc</keyword>
<proteinExistence type="inferred from homology"/>
<comment type="cofactor">
    <cofactor evidence="1">
        <name>Zn(2+)</name>
        <dbReference type="ChEBI" id="CHEBI:29105"/>
    </cofactor>
    <text evidence="1">Binds 1 zinc ion per subunit.</text>
</comment>
<comment type="subcellular location">
    <subcellularLocation>
        <location evidence="1">Cell inner membrane</location>
        <topology evidence="1">Multi-pass membrane protein</topology>
    </subcellularLocation>
</comment>
<comment type="similarity">
    <text evidence="1">Belongs to the peptidase M48B family.</text>
</comment>
<reference key="1">
    <citation type="journal article" date="2000" name="Nature">
        <title>Complete genome sequence of Pseudomonas aeruginosa PAO1, an opportunistic pathogen.</title>
        <authorList>
            <person name="Stover C.K."/>
            <person name="Pham X.-Q.T."/>
            <person name="Erwin A.L."/>
            <person name="Mizoguchi S.D."/>
            <person name="Warrener P."/>
            <person name="Hickey M.J."/>
            <person name="Brinkman F.S.L."/>
            <person name="Hufnagle W.O."/>
            <person name="Kowalik D.J."/>
            <person name="Lagrou M."/>
            <person name="Garber R.L."/>
            <person name="Goltry L."/>
            <person name="Tolentino E."/>
            <person name="Westbrock-Wadman S."/>
            <person name="Yuan Y."/>
            <person name="Brody L.L."/>
            <person name="Coulter S.N."/>
            <person name="Folger K.R."/>
            <person name="Kas A."/>
            <person name="Larbig K."/>
            <person name="Lim R.M."/>
            <person name="Smith K.A."/>
            <person name="Spencer D.H."/>
            <person name="Wong G.K.-S."/>
            <person name="Wu Z."/>
            <person name="Paulsen I.T."/>
            <person name="Reizer J."/>
            <person name="Saier M.H. Jr."/>
            <person name="Hancock R.E.W."/>
            <person name="Lory S."/>
            <person name="Olson M.V."/>
        </authorList>
    </citation>
    <scope>NUCLEOTIDE SEQUENCE [LARGE SCALE GENOMIC DNA]</scope>
    <source>
        <strain>ATCC 15692 / DSM 22644 / CIP 104116 / JCM 14847 / LMG 12228 / 1C / PRS 101 / PAO1</strain>
    </source>
</reference>
<protein>
    <recommendedName>
        <fullName evidence="1">Protease HtpX</fullName>
        <ecNumber evidence="1">3.4.24.-</ecNumber>
    </recommendedName>
    <alternativeName>
        <fullName evidence="1">Heat shock protein HtpX</fullName>
    </alternativeName>
</protein>